<reference key="1">
    <citation type="journal article" date="2008" name="Proc. Natl. Acad. Sci. U.S.A.">
        <title>The genome sequence of Bifidobacterium longum subsp. infantis reveals adaptations for milk utilization within the infant microbiome.</title>
        <authorList>
            <person name="Sela D.A."/>
            <person name="Chapman J."/>
            <person name="Adeuya A."/>
            <person name="Kim J.H."/>
            <person name="Chen F."/>
            <person name="Whitehead T.R."/>
            <person name="Lapidus A."/>
            <person name="Rokhsar D.S."/>
            <person name="Lebrilla C.B."/>
            <person name="German J.B."/>
            <person name="Price N.P."/>
            <person name="Richardson P.M."/>
            <person name="Mills D.A."/>
        </authorList>
    </citation>
    <scope>NUCLEOTIDE SEQUENCE [LARGE SCALE GENOMIC DNA]</scope>
    <source>
        <strain>ATCC 15697 / DSM 20088 / JCM 1222 / NCTC 11817 / S12</strain>
    </source>
</reference>
<reference key="2">
    <citation type="journal article" date="2011" name="Nature">
        <title>Bifidobacteria can protect from enteropathogenic infection through production of acetate.</title>
        <authorList>
            <person name="Fukuda S."/>
            <person name="Toh H."/>
            <person name="Hase K."/>
            <person name="Oshima K."/>
            <person name="Nakanishi Y."/>
            <person name="Yoshimura K."/>
            <person name="Tobe T."/>
            <person name="Clarke J.M."/>
            <person name="Topping D.L."/>
            <person name="Suzuki T."/>
            <person name="Taylor T.D."/>
            <person name="Itoh K."/>
            <person name="Kikuchi J."/>
            <person name="Morita H."/>
            <person name="Hattori M."/>
            <person name="Ohno H."/>
        </authorList>
    </citation>
    <scope>NUCLEOTIDE SEQUENCE [LARGE SCALE GENOMIC DNA]</scope>
    <source>
        <strain>ATCC 15697 / DSM 20088 / JCM 1222 / NCTC 11817 / S12</strain>
    </source>
</reference>
<name>ASSY_BIFLS</name>
<evidence type="ECO:0000255" key="1">
    <source>
        <dbReference type="HAMAP-Rule" id="MF_00005"/>
    </source>
</evidence>
<comment type="catalytic activity">
    <reaction evidence="1">
        <text>L-citrulline + L-aspartate + ATP = 2-(N(omega)-L-arginino)succinate + AMP + diphosphate + H(+)</text>
        <dbReference type="Rhea" id="RHEA:10932"/>
        <dbReference type="ChEBI" id="CHEBI:15378"/>
        <dbReference type="ChEBI" id="CHEBI:29991"/>
        <dbReference type="ChEBI" id="CHEBI:30616"/>
        <dbReference type="ChEBI" id="CHEBI:33019"/>
        <dbReference type="ChEBI" id="CHEBI:57472"/>
        <dbReference type="ChEBI" id="CHEBI:57743"/>
        <dbReference type="ChEBI" id="CHEBI:456215"/>
        <dbReference type="EC" id="6.3.4.5"/>
    </reaction>
</comment>
<comment type="pathway">
    <text evidence="1">Amino-acid biosynthesis; L-arginine biosynthesis; L-arginine from L-ornithine and carbamoyl phosphate: step 2/3.</text>
</comment>
<comment type="subunit">
    <text evidence="1">Homotetramer.</text>
</comment>
<comment type="subcellular location">
    <subcellularLocation>
        <location evidence="1">Cytoplasm</location>
    </subcellularLocation>
</comment>
<comment type="similarity">
    <text evidence="1">Belongs to the argininosuccinate synthase family. Type 1 subfamily.</text>
</comment>
<keyword id="KW-0028">Amino-acid biosynthesis</keyword>
<keyword id="KW-0055">Arginine biosynthesis</keyword>
<keyword id="KW-0067">ATP-binding</keyword>
<keyword id="KW-0963">Cytoplasm</keyword>
<keyword id="KW-0436">Ligase</keyword>
<keyword id="KW-0547">Nucleotide-binding</keyword>
<dbReference type="EC" id="6.3.4.5" evidence="1"/>
<dbReference type="EMBL" id="CP001095">
    <property type="protein sequence ID" value="ACJ52949.1"/>
    <property type="molecule type" value="Genomic_DNA"/>
</dbReference>
<dbReference type="EMBL" id="AP010889">
    <property type="protein sequence ID" value="BAJ69520.1"/>
    <property type="molecule type" value="Genomic_DNA"/>
</dbReference>
<dbReference type="RefSeq" id="WP_012578162.1">
    <property type="nucleotide sequence ID" value="NZ_JDTT01000009.1"/>
</dbReference>
<dbReference type="SMR" id="B7GTP0"/>
<dbReference type="KEGG" id="bln:Blon_1875"/>
<dbReference type="KEGG" id="blon:BLIJ_1941"/>
<dbReference type="PATRIC" id="fig|391904.8.peg.1946"/>
<dbReference type="HOGENOM" id="CLU_032784_4_2_11"/>
<dbReference type="UniPathway" id="UPA00068">
    <property type="reaction ID" value="UER00113"/>
</dbReference>
<dbReference type="Proteomes" id="UP000001360">
    <property type="component" value="Chromosome"/>
</dbReference>
<dbReference type="GO" id="GO:0005737">
    <property type="term" value="C:cytoplasm"/>
    <property type="evidence" value="ECO:0007669"/>
    <property type="project" value="UniProtKB-SubCell"/>
</dbReference>
<dbReference type="GO" id="GO:0004055">
    <property type="term" value="F:argininosuccinate synthase activity"/>
    <property type="evidence" value="ECO:0007669"/>
    <property type="project" value="UniProtKB-UniRule"/>
</dbReference>
<dbReference type="GO" id="GO:0005524">
    <property type="term" value="F:ATP binding"/>
    <property type="evidence" value="ECO:0007669"/>
    <property type="project" value="UniProtKB-UniRule"/>
</dbReference>
<dbReference type="GO" id="GO:0000053">
    <property type="term" value="P:argininosuccinate metabolic process"/>
    <property type="evidence" value="ECO:0007669"/>
    <property type="project" value="TreeGrafter"/>
</dbReference>
<dbReference type="GO" id="GO:0006526">
    <property type="term" value="P:L-arginine biosynthetic process"/>
    <property type="evidence" value="ECO:0007669"/>
    <property type="project" value="UniProtKB-UniRule"/>
</dbReference>
<dbReference type="GO" id="GO:0000050">
    <property type="term" value="P:urea cycle"/>
    <property type="evidence" value="ECO:0007669"/>
    <property type="project" value="TreeGrafter"/>
</dbReference>
<dbReference type="CDD" id="cd01999">
    <property type="entry name" value="ASS"/>
    <property type="match status" value="1"/>
</dbReference>
<dbReference type="FunFam" id="3.40.50.620:FF:000038">
    <property type="entry name" value="Argininosuccinate synthase"/>
    <property type="match status" value="1"/>
</dbReference>
<dbReference type="FunFam" id="3.90.1260.10:FF:000007">
    <property type="entry name" value="Argininosuccinate synthase"/>
    <property type="match status" value="1"/>
</dbReference>
<dbReference type="Gene3D" id="3.90.1260.10">
    <property type="entry name" value="Argininosuccinate synthetase, chain A, domain 2"/>
    <property type="match status" value="1"/>
</dbReference>
<dbReference type="Gene3D" id="3.40.50.620">
    <property type="entry name" value="HUPs"/>
    <property type="match status" value="1"/>
</dbReference>
<dbReference type="Gene3D" id="1.20.5.470">
    <property type="entry name" value="Single helix bin"/>
    <property type="match status" value="1"/>
</dbReference>
<dbReference type="HAMAP" id="MF_00005">
    <property type="entry name" value="Arg_succ_synth_type1"/>
    <property type="match status" value="1"/>
</dbReference>
<dbReference type="InterPro" id="IPR048268">
    <property type="entry name" value="Arginosuc_syn_C"/>
</dbReference>
<dbReference type="InterPro" id="IPR048267">
    <property type="entry name" value="Arginosuc_syn_N"/>
</dbReference>
<dbReference type="InterPro" id="IPR001518">
    <property type="entry name" value="Arginosuc_synth"/>
</dbReference>
<dbReference type="InterPro" id="IPR018223">
    <property type="entry name" value="Arginosuc_synth_CS"/>
</dbReference>
<dbReference type="InterPro" id="IPR023434">
    <property type="entry name" value="Arginosuc_synth_type_1_subfam"/>
</dbReference>
<dbReference type="InterPro" id="IPR024074">
    <property type="entry name" value="AS_cat/multimer_dom_body"/>
</dbReference>
<dbReference type="InterPro" id="IPR014729">
    <property type="entry name" value="Rossmann-like_a/b/a_fold"/>
</dbReference>
<dbReference type="NCBIfam" id="TIGR00032">
    <property type="entry name" value="argG"/>
    <property type="match status" value="1"/>
</dbReference>
<dbReference type="NCBIfam" id="NF001770">
    <property type="entry name" value="PRK00509.1"/>
    <property type="match status" value="1"/>
</dbReference>
<dbReference type="PANTHER" id="PTHR11587">
    <property type="entry name" value="ARGININOSUCCINATE SYNTHASE"/>
    <property type="match status" value="1"/>
</dbReference>
<dbReference type="PANTHER" id="PTHR11587:SF2">
    <property type="entry name" value="ARGININOSUCCINATE SYNTHASE"/>
    <property type="match status" value="1"/>
</dbReference>
<dbReference type="Pfam" id="PF20979">
    <property type="entry name" value="Arginosuc_syn_C"/>
    <property type="match status" value="1"/>
</dbReference>
<dbReference type="Pfam" id="PF00764">
    <property type="entry name" value="Arginosuc_synth"/>
    <property type="match status" value="1"/>
</dbReference>
<dbReference type="SUPFAM" id="SSF52402">
    <property type="entry name" value="Adenine nucleotide alpha hydrolases-like"/>
    <property type="match status" value="1"/>
</dbReference>
<dbReference type="SUPFAM" id="SSF69864">
    <property type="entry name" value="Argininosuccinate synthetase, C-terminal domain"/>
    <property type="match status" value="1"/>
</dbReference>
<dbReference type="PROSITE" id="PS00564">
    <property type="entry name" value="ARGININOSUCCIN_SYN_1"/>
    <property type="match status" value="1"/>
</dbReference>
<dbReference type="PROSITE" id="PS00565">
    <property type="entry name" value="ARGININOSUCCIN_SYN_2"/>
    <property type="match status" value="1"/>
</dbReference>
<feature type="chain" id="PRO_1000191881" description="Argininosuccinate synthase">
    <location>
        <begin position="1"/>
        <end position="412"/>
    </location>
</feature>
<feature type="binding site" evidence="1">
    <location>
        <begin position="10"/>
        <end position="18"/>
    </location>
    <ligand>
        <name>ATP</name>
        <dbReference type="ChEBI" id="CHEBI:30616"/>
    </ligand>
</feature>
<feature type="binding site" evidence="1">
    <location>
        <position position="89"/>
    </location>
    <ligand>
        <name>L-citrulline</name>
        <dbReference type="ChEBI" id="CHEBI:57743"/>
    </ligand>
</feature>
<feature type="binding site" evidence="1">
    <location>
        <position position="119"/>
    </location>
    <ligand>
        <name>ATP</name>
        <dbReference type="ChEBI" id="CHEBI:30616"/>
    </ligand>
</feature>
<feature type="binding site" evidence="1">
    <location>
        <position position="121"/>
    </location>
    <ligand>
        <name>L-aspartate</name>
        <dbReference type="ChEBI" id="CHEBI:29991"/>
    </ligand>
</feature>
<feature type="binding site" evidence="1">
    <location>
        <position position="125"/>
    </location>
    <ligand>
        <name>L-aspartate</name>
        <dbReference type="ChEBI" id="CHEBI:29991"/>
    </ligand>
</feature>
<feature type="binding site" evidence="1">
    <location>
        <position position="125"/>
    </location>
    <ligand>
        <name>L-citrulline</name>
        <dbReference type="ChEBI" id="CHEBI:57743"/>
    </ligand>
</feature>
<feature type="binding site" evidence="1">
    <location>
        <position position="126"/>
    </location>
    <ligand>
        <name>L-aspartate</name>
        <dbReference type="ChEBI" id="CHEBI:29991"/>
    </ligand>
</feature>
<feature type="binding site" evidence="1">
    <location>
        <position position="129"/>
    </location>
    <ligand>
        <name>L-citrulline</name>
        <dbReference type="ChEBI" id="CHEBI:57743"/>
    </ligand>
</feature>
<feature type="binding site" evidence="1">
    <location>
        <position position="177"/>
    </location>
    <ligand>
        <name>L-citrulline</name>
        <dbReference type="ChEBI" id="CHEBI:57743"/>
    </ligand>
</feature>
<feature type="binding site" evidence="1">
    <location>
        <position position="261"/>
    </location>
    <ligand>
        <name>L-citrulline</name>
        <dbReference type="ChEBI" id="CHEBI:57743"/>
    </ligand>
</feature>
<feature type="binding site" evidence="1">
    <location>
        <position position="273"/>
    </location>
    <ligand>
        <name>L-citrulline</name>
        <dbReference type="ChEBI" id="CHEBI:57743"/>
    </ligand>
</feature>
<organism>
    <name type="scientific">Bifidobacterium longum subsp. infantis (strain ATCC 15697 / DSM 20088 / JCM 1222 / NCTC 11817 / S12)</name>
    <dbReference type="NCBI Taxonomy" id="391904"/>
    <lineage>
        <taxon>Bacteria</taxon>
        <taxon>Bacillati</taxon>
        <taxon>Actinomycetota</taxon>
        <taxon>Actinomycetes</taxon>
        <taxon>Bifidobacteriales</taxon>
        <taxon>Bifidobacteriaceae</taxon>
        <taxon>Bifidobacterium</taxon>
    </lineage>
</organism>
<accession>B7GTP0</accession>
<accession>E8MLU3</accession>
<gene>
    <name evidence="1" type="primary">argG</name>
    <name type="ordered locus">Blon_1875</name>
    <name type="ordered locus">BLIJ_1941</name>
</gene>
<protein>
    <recommendedName>
        <fullName evidence="1">Argininosuccinate synthase</fullName>
        <ecNumber evidence="1">6.3.4.5</ecNumber>
    </recommendedName>
    <alternativeName>
        <fullName evidence="1">Citrulline--aspartate ligase</fullName>
    </alternativeName>
</protein>
<sequence>MADNKRIVLAYSGGLDTSVAISYLKERTGKDVVAVSLDVGQGGESLETIKQRALACGAVESYVVDARDEFANEYCMKALKANAMYEGVYPLVSAISRPLISKHLVRAAHQFGADTISHGCTGKGNDQVRFEVSIASIDPTLKAISPIRDLSLTRDVEIAFAKEHKLPITQTEKSPYSIDQNVWGRAIETGFLEDPWNGPTKDCYSYTDDPAFPPVEDEVVIEFKEGVPVKIDGRDVTPLQAIEEMNRRAGAQGIGRIDLIEDRLVGIKSRELYEAPGAVALITAHQELENCCLEREQHRIKRDIDKRWGELVYDAQWFSPATQSLNAFIEDTQKYVSGEIRMVLHGGRAVVTGRRSDSSLYDYKLATYDSGDTFDQKSSNGFIDIYGLPSRVAAARDVKFGNGIEVPKNTVE</sequence>
<proteinExistence type="inferred from homology"/>